<proteinExistence type="inferred from homology"/>
<keyword id="KW-0240">DNA-directed RNA polymerase</keyword>
<keyword id="KW-0548">Nucleotidyltransferase</keyword>
<keyword id="KW-1185">Reference proteome</keyword>
<keyword id="KW-0804">Transcription</keyword>
<keyword id="KW-0808">Transferase</keyword>
<accession>Q5FTX7</accession>
<dbReference type="EC" id="2.7.7.6" evidence="1"/>
<dbReference type="EMBL" id="CP000009">
    <property type="protein sequence ID" value="AAW60169.1"/>
    <property type="status" value="ALT_INIT"/>
    <property type="molecule type" value="Genomic_DNA"/>
</dbReference>
<dbReference type="RefSeq" id="WP_041242769.1">
    <property type="nucleotide sequence ID" value="NC_006677.1"/>
</dbReference>
<dbReference type="SMR" id="Q5FTX7"/>
<dbReference type="STRING" id="290633.GOX0386"/>
<dbReference type="KEGG" id="gox:GOX0386"/>
<dbReference type="eggNOG" id="COG0085">
    <property type="taxonomic scope" value="Bacteria"/>
</dbReference>
<dbReference type="HOGENOM" id="CLU_000524_4_0_5"/>
<dbReference type="Proteomes" id="UP000006375">
    <property type="component" value="Chromosome"/>
</dbReference>
<dbReference type="GO" id="GO:0000428">
    <property type="term" value="C:DNA-directed RNA polymerase complex"/>
    <property type="evidence" value="ECO:0007669"/>
    <property type="project" value="UniProtKB-KW"/>
</dbReference>
<dbReference type="GO" id="GO:0003677">
    <property type="term" value="F:DNA binding"/>
    <property type="evidence" value="ECO:0007669"/>
    <property type="project" value="UniProtKB-UniRule"/>
</dbReference>
<dbReference type="GO" id="GO:0003899">
    <property type="term" value="F:DNA-directed RNA polymerase activity"/>
    <property type="evidence" value="ECO:0007669"/>
    <property type="project" value="UniProtKB-UniRule"/>
</dbReference>
<dbReference type="GO" id="GO:0032549">
    <property type="term" value="F:ribonucleoside binding"/>
    <property type="evidence" value="ECO:0007669"/>
    <property type="project" value="InterPro"/>
</dbReference>
<dbReference type="GO" id="GO:0006351">
    <property type="term" value="P:DNA-templated transcription"/>
    <property type="evidence" value="ECO:0007669"/>
    <property type="project" value="UniProtKB-UniRule"/>
</dbReference>
<dbReference type="CDD" id="cd00653">
    <property type="entry name" value="RNA_pol_B_RPB2"/>
    <property type="match status" value="1"/>
</dbReference>
<dbReference type="FunFam" id="3.90.1800.10:FF:000001">
    <property type="entry name" value="DNA-directed RNA polymerase subunit beta"/>
    <property type="match status" value="1"/>
</dbReference>
<dbReference type="Gene3D" id="2.40.50.100">
    <property type="match status" value="1"/>
</dbReference>
<dbReference type="Gene3D" id="2.40.50.150">
    <property type="match status" value="1"/>
</dbReference>
<dbReference type="Gene3D" id="3.90.1100.10">
    <property type="match status" value="2"/>
</dbReference>
<dbReference type="Gene3D" id="2.30.150.10">
    <property type="entry name" value="DNA-directed RNA polymerase, beta subunit, external 1 domain"/>
    <property type="match status" value="1"/>
</dbReference>
<dbReference type="Gene3D" id="2.40.270.10">
    <property type="entry name" value="DNA-directed RNA polymerase, subunit 2, domain 6"/>
    <property type="match status" value="2"/>
</dbReference>
<dbReference type="Gene3D" id="3.90.1800.10">
    <property type="entry name" value="RNA polymerase alpha subunit dimerisation domain"/>
    <property type="match status" value="1"/>
</dbReference>
<dbReference type="Gene3D" id="3.90.1110.10">
    <property type="entry name" value="RNA polymerase Rpb2, domain 2"/>
    <property type="match status" value="2"/>
</dbReference>
<dbReference type="HAMAP" id="MF_01321">
    <property type="entry name" value="RNApol_bact_RpoB"/>
    <property type="match status" value="1"/>
</dbReference>
<dbReference type="InterPro" id="IPR042107">
    <property type="entry name" value="DNA-dir_RNA_pol_bsu_ext_1_sf"/>
</dbReference>
<dbReference type="InterPro" id="IPR019462">
    <property type="entry name" value="DNA-dir_RNA_pol_bsu_external_1"/>
</dbReference>
<dbReference type="InterPro" id="IPR015712">
    <property type="entry name" value="DNA-dir_RNA_pol_su2"/>
</dbReference>
<dbReference type="InterPro" id="IPR007120">
    <property type="entry name" value="DNA-dir_RNAP_su2_dom"/>
</dbReference>
<dbReference type="InterPro" id="IPR037033">
    <property type="entry name" value="DNA-dir_RNAP_su2_hyb_sf"/>
</dbReference>
<dbReference type="InterPro" id="IPR010243">
    <property type="entry name" value="RNA_pol_bsu_bac"/>
</dbReference>
<dbReference type="InterPro" id="IPR007121">
    <property type="entry name" value="RNA_pol_bsu_CS"/>
</dbReference>
<dbReference type="InterPro" id="IPR007644">
    <property type="entry name" value="RNA_pol_bsu_protrusion"/>
</dbReference>
<dbReference type="InterPro" id="IPR007642">
    <property type="entry name" value="RNA_pol_Rpb2_2"/>
</dbReference>
<dbReference type="InterPro" id="IPR037034">
    <property type="entry name" value="RNA_pol_Rpb2_2_sf"/>
</dbReference>
<dbReference type="InterPro" id="IPR007645">
    <property type="entry name" value="RNA_pol_Rpb2_3"/>
</dbReference>
<dbReference type="InterPro" id="IPR007641">
    <property type="entry name" value="RNA_pol_Rpb2_7"/>
</dbReference>
<dbReference type="InterPro" id="IPR014724">
    <property type="entry name" value="RNA_pol_RPB2_OB-fold"/>
</dbReference>
<dbReference type="NCBIfam" id="NF001616">
    <property type="entry name" value="PRK00405.1"/>
    <property type="match status" value="1"/>
</dbReference>
<dbReference type="NCBIfam" id="TIGR02013">
    <property type="entry name" value="rpoB"/>
    <property type="match status" value="1"/>
</dbReference>
<dbReference type="PANTHER" id="PTHR20856">
    <property type="entry name" value="DNA-DIRECTED RNA POLYMERASE I SUBUNIT 2"/>
    <property type="match status" value="1"/>
</dbReference>
<dbReference type="Pfam" id="PF04563">
    <property type="entry name" value="RNA_pol_Rpb2_1"/>
    <property type="match status" value="1"/>
</dbReference>
<dbReference type="Pfam" id="PF04561">
    <property type="entry name" value="RNA_pol_Rpb2_2"/>
    <property type="match status" value="1"/>
</dbReference>
<dbReference type="Pfam" id="PF04565">
    <property type="entry name" value="RNA_pol_Rpb2_3"/>
    <property type="match status" value="1"/>
</dbReference>
<dbReference type="Pfam" id="PF10385">
    <property type="entry name" value="RNA_pol_Rpb2_45"/>
    <property type="match status" value="1"/>
</dbReference>
<dbReference type="Pfam" id="PF00562">
    <property type="entry name" value="RNA_pol_Rpb2_6"/>
    <property type="match status" value="1"/>
</dbReference>
<dbReference type="Pfam" id="PF04560">
    <property type="entry name" value="RNA_pol_Rpb2_7"/>
    <property type="match status" value="1"/>
</dbReference>
<dbReference type="SUPFAM" id="SSF64484">
    <property type="entry name" value="beta and beta-prime subunits of DNA dependent RNA-polymerase"/>
    <property type="match status" value="1"/>
</dbReference>
<dbReference type="PROSITE" id="PS01166">
    <property type="entry name" value="RNA_POL_BETA"/>
    <property type="match status" value="1"/>
</dbReference>
<gene>
    <name evidence="1" type="primary">rpoB</name>
    <name type="ordered locus">GOX0386</name>
</gene>
<name>RPOB_GLUOX</name>
<protein>
    <recommendedName>
        <fullName evidence="1">DNA-directed RNA polymerase subunit beta</fullName>
        <shortName evidence="1">RNAP subunit beta</shortName>
        <ecNumber evidence="1">2.7.7.6</ecNumber>
    </recommendedName>
    <alternativeName>
        <fullName evidence="1">RNA polymerase subunit beta</fullName>
    </alternativeName>
    <alternativeName>
        <fullName evidence="1">Transcriptase subunit beta</fullName>
    </alternativeName>
</protein>
<organism>
    <name type="scientific">Gluconobacter oxydans (strain 621H)</name>
    <name type="common">Gluconobacter suboxydans</name>
    <dbReference type="NCBI Taxonomy" id="290633"/>
    <lineage>
        <taxon>Bacteria</taxon>
        <taxon>Pseudomonadati</taxon>
        <taxon>Pseudomonadota</taxon>
        <taxon>Alphaproteobacteria</taxon>
        <taxon>Acetobacterales</taxon>
        <taxon>Acetobacteraceae</taxon>
        <taxon>Gluconobacter</taxon>
    </lineage>
</organism>
<evidence type="ECO:0000255" key="1">
    <source>
        <dbReference type="HAMAP-Rule" id="MF_01321"/>
    </source>
</evidence>
<evidence type="ECO:0000305" key="2"/>
<comment type="function">
    <text evidence="1">DNA-dependent RNA polymerase catalyzes the transcription of DNA into RNA using the four ribonucleoside triphosphates as substrates.</text>
</comment>
<comment type="catalytic activity">
    <reaction evidence="1">
        <text>RNA(n) + a ribonucleoside 5'-triphosphate = RNA(n+1) + diphosphate</text>
        <dbReference type="Rhea" id="RHEA:21248"/>
        <dbReference type="Rhea" id="RHEA-COMP:14527"/>
        <dbReference type="Rhea" id="RHEA-COMP:17342"/>
        <dbReference type="ChEBI" id="CHEBI:33019"/>
        <dbReference type="ChEBI" id="CHEBI:61557"/>
        <dbReference type="ChEBI" id="CHEBI:140395"/>
        <dbReference type="EC" id="2.7.7.6"/>
    </reaction>
</comment>
<comment type="subunit">
    <text evidence="1">The RNAP catalytic core consists of 2 alpha, 1 beta, 1 beta' and 1 omega subunit. When a sigma factor is associated with the core the holoenzyme is formed, which can initiate transcription.</text>
</comment>
<comment type="similarity">
    <text evidence="1">Belongs to the RNA polymerase beta chain family.</text>
</comment>
<comment type="sequence caution" evidence="2">
    <conflict type="erroneous initiation">
        <sequence resource="EMBL-CDS" id="AAW60169"/>
    </conflict>
</comment>
<sequence length="1390" mass="155016">MNAITKSFTGRKRIRKSFGRIPEIAPMPNLIDVQRASYEAFLQMNVSPDSRQDAGLQEVFRSVFPINDFAGRGRLDFMSYEFEDPKYDVEECIQRGLTYAAPLKVILRLTTWDIDEDTGSRSIHDMKEQPVYMGDMPLMTDNGTFIINGTERVIVSQMHRSPGVFFDHDKGKTHSSGKYLFAARVIPYRGSWLDFEFDAKDLIYVRIDRKRKLPVTTLLYALEGANYLAQREQKIAEGGDVEGLDIRGMDQDEILSYFYEAVPFTRLGGEWARPFDPDAFRGLKLLSPLVDADTGEVVAEADAKLTARMVRKIAEKTRVVQVGRLDILGRFLAYDLVNENTGEIYGEAGEELTEDRLAALEEMGITELPLLSVDGSHGPWIRNTLAADKNSCRDEALIDIYRIMRPGEPPTKETAEAMFHGLFFDQGRYDLSAVGRVKMNMRLDVDAPDTLRVLRKEDILRTIKIMCELKDGRGQIDDIDNLGNRRVRSVGELMENQYRVGLLRMERAIRERMGSVDIDTVMPHDLINAKPAAAAVREFFGSSQLSQFMDQTNPLSEVTHKRRLSALGPGGLTRERAGFEVRDVHPTHYGRICPIETAGRPNIGLINSLSTYAKVNKYGFIETPYRLVEEGVLQDGWKYLSAMEEEKLVVAQADAKQDDQGRLTDELVSVRRSGDFRVVPPDQVTACDVSPKQLVSVAAALIPFLENDDANRALMGANMQRQAVPLVKADAPLVGTGMEAAVAHDSGATIVAKRRGVIDQIDGARIVVRATDEAGATQGVDIYRLRKYMRSNQSTCINQRPLVKVGDTVHAGDIIADGPSTELGELALGRNVLVAFMPWNGYNFEDSILISERIARDDVFTSIHIEEFEVMARDTKLGQEEITRDIPNVGEEALRNLDEAGIVYVGAEVNPGDILVGKVTPKGESPMTPEEKLLRAIFGEKASDVRDTSLKLPPGTTGTIVDVRVFSRRGVDKDERAMAIERAEIERLTKDRDDERGIQERSFYNRLRERLIGQTAGAGFKGIRSGTPITEEVLDEHHRATWASITVTSDEVMAELEKLRGEFKEATRRIDARFDSKVEKLQRGDELPPGVMKMVKVFVAVKRKLQPGDKMAGRHGNKGVVSRVVPVEDMPFLENGQAVDIVLNPLGVPSRMNIGQILETHLGWACANIGASIGDMVDEYQRTGERKQELLDRLHEVYGDVIFNEDVATLPNEQLIELANNLRKGLPIATPVFDGASIPDIEEMLEKAGVNKSGQSQLIDGRTGEPFERQTTVGYIYMLKLHHLVDDKIHARSIGPYSLVTQQPLGGKAQFGGQRFGEMEVWALEAYGAAYTLQEMLTVKSDDVSGRTKVYEAIVREQDDFEAGIPESFNVLIKELKSLGLNVELEQSGL</sequence>
<feature type="chain" id="PRO_0000224061" description="DNA-directed RNA polymerase subunit beta">
    <location>
        <begin position="1"/>
        <end position="1390"/>
    </location>
</feature>
<reference key="1">
    <citation type="journal article" date="2005" name="Nat. Biotechnol.">
        <title>Complete genome sequence of the acetic acid bacterium Gluconobacter oxydans.</title>
        <authorList>
            <person name="Prust C."/>
            <person name="Hoffmeister M."/>
            <person name="Liesegang H."/>
            <person name="Wiezer A."/>
            <person name="Fricke W.F."/>
            <person name="Ehrenreich A."/>
            <person name="Gottschalk G."/>
            <person name="Deppenmeier U."/>
        </authorList>
    </citation>
    <scope>NUCLEOTIDE SEQUENCE [LARGE SCALE GENOMIC DNA]</scope>
    <source>
        <strain>621H</strain>
    </source>
</reference>